<comment type="function">
    <text evidence="1">Binds 16S rRNA, required for the assembly of 30S particles and may also be responsible for determining the conformation of the 16S rRNA at the A site.</text>
</comment>
<comment type="subunit">
    <text evidence="1">Part of the 30S ribosomal subunit. Contacts proteins S3 and S10.</text>
</comment>
<comment type="similarity">
    <text evidence="1">Belongs to the universal ribosomal protein uS14 family.</text>
</comment>
<accession>Q83GW6</accession>
<organism>
    <name type="scientific">Tropheryma whipplei (strain Twist)</name>
    <name type="common">Whipple's bacillus</name>
    <dbReference type="NCBI Taxonomy" id="203267"/>
    <lineage>
        <taxon>Bacteria</taxon>
        <taxon>Bacillati</taxon>
        <taxon>Actinomycetota</taxon>
        <taxon>Actinomycetes</taxon>
        <taxon>Micrococcales</taxon>
        <taxon>Tropherymataceae</taxon>
        <taxon>Tropheryma</taxon>
    </lineage>
</organism>
<name>RS14_TROWT</name>
<feature type="chain" id="PRO_1000128625" description="Small ribosomal subunit protein uS14">
    <location>
        <begin position="1"/>
        <end position="101"/>
    </location>
</feature>
<evidence type="ECO:0000255" key="1">
    <source>
        <dbReference type="HAMAP-Rule" id="MF_00537"/>
    </source>
</evidence>
<evidence type="ECO:0000305" key="2"/>
<gene>
    <name evidence="1" type="primary">rpsN</name>
    <name type="synonym">twt115</name>
    <name type="ordered locus">TWT_115</name>
</gene>
<keyword id="KW-1185">Reference proteome</keyword>
<keyword id="KW-0687">Ribonucleoprotein</keyword>
<keyword id="KW-0689">Ribosomal protein</keyword>
<keyword id="KW-0694">RNA-binding</keyword>
<keyword id="KW-0699">rRNA-binding</keyword>
<dbReference type="EMBL" id="AE014184">
    <property type="protein sequence ID" value="AAO44212.1"/>
    <property type="molecule type" value="Genomic_DNA"/>
</dbReference>
<dbReference type="RefSeq" id="WP_011096088.1">
    <property type="nucleotide sequence ID" value="NC_004572.3"/>
</dbReference>
<dbReference type="SMR" id="Q83GW6"/>
<dbReference type="STRING" id="203267.TWT_115"/>
<dbReference type="GeneID" id="67387899"/>
<dbReference type="KEGG" id="twh:TWT_115"/>
<dbReference type="eggNOG" id="COG0199">
    <property type="taxonomic scope" value="Bacteria"/>
</dbReference>
<dbReference type="HOGENOM" id="CLU_139869_0_1_11"/>
<dbReference type="OrthoDB" id="9810484at2"/>
<dbReference type="Proteomes" id="UP000002200">
    <property type="component" value="Chromosome"/>
</dbReference>
<dbReference type="GO" id="GO:0015935">
    <property type="term" value="C:small ribosomal subunit"/>
    <property type="evidence" value="ECO:0007669"/>
    <property type="project" value="TreeGrafter"/>
</dbReference>
<dbReference type="GO" id="GO:0019843">
    <property type="term" value="F:rRNA binding"/>
    <property type="evidence" value="ECO:0007669"/>
    <property type="project" value="UniProtKB-UniRule"/>
</dbReference>
<dbReference type="GO" id="GO:0003735">
    <property type="term" value="F:structural constituent of ribosome"/>
    <property type="evidence" value="ECO:0007669"/>
    <property type="project" value="InterPro"/>
</dbReference>
<dbReference type="GO" id="GO:0006412">
    <property type="term" value="P:translation"/>
    <property type="evidence" value="ECO:0007669"/>
    <property type="project" value="UniProtKB-UniRule"/>
</dbReference>
<dbReference type="FunFam" id="1.10.287.1480:FF:000001">
    <property type="entry name" value="30S ribosomal protein S14"/>
    <property type="match status" value="1"/>
</dbReference>
<dbReference type="Gene3D" id="1.10.287.1480">
    <property type="match status" value="1"/>
</dbReference>
<dbReference type="HAMAP" id="MF_00537">
    <property type="entry name" value="Ribosomal_uS14_1"/>
    <property type="match status" value="1"/>
</dbReference>
<dbReference type="InterPro" id="IPR001209">
    <property type="entry name" value="Ribosomal_uS14"/>
</dbReference>
<dbReference type="InterPro" id="IPR023036">
    <property type="entry name" value="Ribosomal_uS14_bac/plastid"/>
</dbReference>
<dbReference type="NCBIfam" id="NF006477">
    <property type="entry name" value="PRK08881.1"/>
    <property type="match status" value="1"/>
</dbReference>
<dbReference type="PANTHER" id="PTHR19836">
    <property type="entry name" value="30S RIBOSOMAL PROTEIN S14"/>
    <property type="match status" value="1"/>
</dbReference>
<dbReference type="PANTHER" id="PTHR19836:SF23">
    <property type="entry name" value="SMALL RIBOSOMAL SUBUNIT PROTEIN US14A"/>
    <property type="match status" value="1"/>
</dbReference>
<dbReference type="Pfam" id="PF00253">
    <property type="entry name" value="Ribosomal_S14"/>
    <property type="match status" value="1"/>
</dbReference>
<dbReference type="SUPFAM" id="SSF57716">
    <property type="entry name" value="Glucocorticoid receptor-like (DNA-binding domain)"/>
    <property type="match status" value="1"/>
</dbReference>
<proteinExistence type="inferred from homology"/>
<sequence length="101" mass="11501">MSKLSKIVKNEKRKVIVARYAARRQELKRIIAAPGTAPERRDEAQAALQKLPRDASPVRVRSRDVVDGRPRGILSRFGVSRIRFREMAHRGELPGITKSSW</sequence>
<protein>
    <recommendedName>
        <fullName evidence="1">Small ribosomal subunit protein uS14</fullName>
    </recommendedName>
    <alternativeName>
        <fullName evidence="2">30S ribosomal protein S14</fullName>
    </alternativeName>
</protein>
<reference key="1">
    <citation type="journal article" date="2003" name="Genome Res.">
        <title>Tropheryma whipplei twist: a human pathogenic Actinobacteria with a reduced genome.</title>
        <authorList>
            <person name="Raoult D."/>
            <person name="Ogata H."/>
            <person name="Audic S."/>
            <person name="Robert C."/>
            <person name="Suhre K."/>
            <person name="Drancourt M."/>
            <person name="Claverie J.-M."/>
        </authorList>
    </citation>
    <scope>NUCLEOTIDE SEQUENCE [LARGE SCALE GENOMIC DNA]</scope>
    <source>
        <strain>Twist</strain>
    </source>
</reference>